<sequence>MFTPTDISGEPSAVGTQWTPYLSHPVDFGAQHFLEAMLNVISQPNINSSVIMRADIISDSLNMMPNIMGTDKANEGFIFDTHEGPVDDDKKDTDKDKNTPVPPNLQDYEPRQVEVTPCPVKRVIVRRIIPRNPQNDFSVNQTCIVHSDKPLWDSDGKETSEGAKIAISYISHHDHPKSCPYYLPCVKAVLLYFDGSAISVYYEKYTDYELSAEQEERCGRIALHLLHTVFRHSSGQKAGYKKRVHHDMIIDRIKFQDRYIYLKQKYAHSLVSSWVESTDPRKHVFEDLAIAAFLIELWGQMYKNKDDIYFYDLGCGNGLLVNILIKEGYVGEGVDARARKSWQTYEPEVTQKLLEKIVVPTVLLDQMVGQAQYLPPHAAEKRLAEANGLATDPRVFQTAGLPENAFLIGNHSDELTCWIPLMDRPFMVIPCCSHALSGEKKRFPPTSSDPEEKSTYRSLVGHVEQLSSKIGWQVEKEYLRIPSTRNAAVIGRTRVEPQMNIFEILYSEGGGEGWVERARDLCAKSPRNH</sequence>
<organism>
    <name type="scientific">Yarrowia lipolytica (strain CLIB 122 / E 150)</name>
    <name type="common">Yeast</name>
    <name type="synonym">Candida lipolytica</name>
    <dbReference type="NCBI Taxonomy" id="284591"/>
    <lineage>
        <taxon>Eukaryota</taxon>
        <taxon>Fungi</taxon>
        <taxon>Dikarya</taxon>
        <taxon>Ascomycota</taxon>
        <taxon>Saccharomycotina</taxon>
        <taxon>Dipodascomycetes</taxon>
        <taxon>Dipodascales</taxon>
        <taxon>Dipodascales incertae sedis</taxon>
        <taxon>Yarrowia</taxon>
    </lineage>
</organism>
<keyword id="KW-0963">Cytoplasm</keyword>
<keyword id="KW-0489">Methyltransferase</keyword>
<keyword id="KW-1185">Reference proteome</keyword>
<keyword id="KW-0949">S-adenosyl-L-methionine</keyword>
<keyword id="KW-0808">Transferase</keyword>
<keyword id="KW-0819">tRNA processing</keyword>
<name>TRM44_YARLI</name>
<feature type="chain" id="PRO_0000249910" description="tRNA (uracil-O(2)-)-methyltransferase">
    <location>
        <begin position="1"/>
        <end position="529"/>
    </location>
</feature>
<feature type="region of interest" description="Disordered" evidence="2">
    <location>
        <begin position="78"/>
        <end position="107"/>
    </location>
</feature>
<feature type="compositionally biased region" description="Basic and acidic residues" evidence="2">
    <location>
        <begin position="80"/>
        <end position="98"/>
    </location>
</feature>
<accession>Q6C7U7</accession>
<proteinExistence type="inferred from homology"/>
<dbReference type="EC" id="2.1.1.211"/>
<dbReference type="EMBL" id="CR382130">
    <property type="protein sequence ID" value="CAG81469.1"/>
    <property type="molecule type" value="Genomic_DNA"/>
</dbReference>
<dbReference type="RefSeq" id="XP_503265.1">
    <property type="nucleotide sequence ID" value="XM_503265.1"/>
</dbReference>
<dbReference type="FunCoup" id="Q6C7U7">
    <property type="interactions" value="96"/>
</dbReference>
<dbReference type="STRING" id="284591.Q6C7U7"/>
<dbReference type="EnsemblFungi" id="CAG81469">
    <property type="protein sequence ID" value="CAG81469"/>
    <property type="gene ID" value="YALI0_D25212g"/>
</dbReference>
<dbReference type="KEGG" id="yli:2910783"/>
<dbReference type="VEuPathDB" id="FungiDB:YALI0_D25212g"/>
<dbReference type="HOGENOM" id="CLU_018580_2_0_1"/>
<dbReference type="InParanoid" id="Q6C7U7"/>
<dbReference type="OMA" id="IREPNIN"/>
<dbReference type="OrthoDB" id="122559at4891"/>
<dbReference type="Proteomes" id="UP000001300">
    <property type="component" value="Chromosome D"/>
</dbReference>
<dbReference type="GO" id="GO:0005737">
    <property type="term" value="C:cytoplasm"/>
    <property type="evidence" value="ECO:0007669"/>
    <property type="project" value="UniProtKB-SubCell"/>
</dbReference>
<dbReference type="GO" id="GO:0016300">
    <property type="term" value="F:tRNA (uridine) methyltransferase activity"/>
    <property type="evidence" value="ECO:0000318"/>
    <property type="project" value="GO_Central"/>
</dbReference>
<dbReference type="GO" id="GO:0141101">
    <property type="term" value="F:tRNA(Ser) (uridine(44)-2'-O-)-methyltransferase activity"/>
    <property type="evidence" value="ECO:0007669"/>
    <property type="project" value="UniProtKB-EC"/>
</dbReference>
<dbReference type="GO" id="GO:0030488">
    <property type="term" value="P:tRNA methylation"/>
    <property type="evidence" value="ECO:0000318"/>
    <property type="project" value="GO_Central"/>
</dbReference>
<dbReference type="InterPro" id="IPR011671">
    <property type="entry name" value="tRNA_uracil_MeTrfase"/>
</dbReference>
<dbReference type="PANTHER" id="PTHR21210">
    <property type="entry name" value="TRNA (URACIL-O(2)-)-METHYLTRANSFERASE-RELATED"/>
    <property type="match status" value="1"/>
</dbReference>
<dbReference type="PANTHER" id="PTHR21210:SF0">
    <property type="entry name" value="TRNA (URACIL-O(2)-)-METHYLTRANSFERASE-RELATED"/>
    <property type="match status" value="1"/>
</dbReference>
<dbReference type="Pfam" id="PF07757">
    <property type="entry name" value="AdoMet_MTase"/>
    <property type="match status" value="1"/>
</dbReference>
<comment type="function">
    <text evidence="1">Probable adenosyl-L-methionine (AdoMet)-dependent tRNA (uracil-O(2)-)-methyltransferase.</text>
</comment>
<comment type="catalytic activity">
    <reaction>
        <text>uridine(44) in tRNA(Ser) + S-adenosyl-L-methionine = 2'-O-methyluridine(44) in tRNA(Ser) + S-adenosyl-L-homocysteine + H(+)</text>
        <dbReference type="Rhea" id="RHEA:43100"/>
        <dbReference type="Rhea" id="RHEA-COMP:10339"/>
        <dbReference type="Rhea" id="RHEA-COMP:10340"/>
        <dbReference type="ChEBI" id="CHEBI:15378"/>
        <dbReference type="ChEBI" id="CHEBI:57856"/>
        <dbReference type="ChEBI" id="CHEBI:59789"/>
        <dbReference type="ChEBI" id="CHEBI:65315"/>
        <dbReference type="ChEBI" id="CHEBI:74478"/>
        <dbReference type="EC" id="2.1.1.211"/>
    </reaction>
</comment>
<comment type="subcellular location">
    <subcellularLocation>
        <location evidence="1">Cytoplasm</location>
    </subcellularLocation>
</comment>
<comment type="similarity">
    <text evidence="3">Belongs to the TRM44 family.</text>
</comment>
<gene>
    <name type="primary">TRM44</name>
    <name type="ordered locus">YALI0D25212g</name>
</gene>
<protein>
    <recommendedName>
        <fullName>tRNA (uracil-O(2)-)-methyltransferase</fullName>
        <ecNumber>2.1.1.211</ecNumber>
    </recommendedName>
</protein>
<evidence type="ECO:0000250" key="1"/>
<evidence type="ECO:0000256" key="2">
    <source>
        <dbReference type="SAM" id="MobiDB-lite"/>
    </source>
</evidence>
<evidence type="ECO:0000305" key="3"/>
<reference key="1">
    <citation type="journal article" date="2004" name="Nature">
        <title>Genome evolution in yeasts.</title>
        <authorList>
            <person name="Dujon B."/>
            <person name="Sherman D."/>
            <person name="Fischer G."/>
            <person name="Durrens P."/>
            <person name="Casaregola S."/>
            <person name="Lafontaine I."/>
            <person name="de Montigny J."/>
            <person name="Marck C."/>
            <person name="Neuveglise C."/>
            <person name="Talla E."/>
            <person name="Goffard N."/>
            <person name="Frangeul L."/>
            <person name="Aigle M."/>
            <person name="Anthouard V."/>
            <person name="Babour A."/>
            <person name="Barbe V."/>
            <person name="Barnay S."/>
            <person name="Blanchin S."/>
            <person name="Beckerich J.-M."/>
            <person name="Beyne E."/>
            <person name="Bleykasten C."/>
            <person name="Boisrame A."/>
            <person name="Boyer J."/>
            <person name="Cattolico L."/>
            <person name="Confanioleri F."/>
            <person name="de Daruvar A."/>
            <person name="Despons L."/>
            <person name="Fabre E."/>
            <person name="Fairhead C."/>
            <person name="Ferry-Dumazet H."/>
            <person name="Groppi A."/>
            <person name="Hantraye F."/>
            <person name="Hennequin C."/>
            <person name="Jauniaux N."/>
            <person name="Joyet P."/>
            <person name="Kachouri R."/>
            <person name="Kerrest A."/>
            <person name="Koszul R."/>
            <person name="Lemaire M."/>
            <person name="Lesur I."/>
            <person name="Ma L."/>
            <person name="Muller H."/>
            <person name="Nicaud J.-M."/>
            <person name="Nikolski M."/>
            <person name="Oztas S."/>
            <person name="Ozier-Kalogeropoulos O."/>
            <person name="Pellenz S."/>
            <person name="Potier S."/>
            <person name="Richard G.-F."/>
            <person name="Straub M.-L."/>
            <person name="Suleau A."/>
            <person name="Swennen D."/>
            <person name="Tekaia F."/>
            <person name="Wesolowski-Louvel M."/>
            <person name="Westhof E."/>
            <person name="Wirth B."/>
            <person name="Zeniou-Meyer M."/>
            <person name="Zivanovic Y."/>
            <person name="Bolotin-Fukuhara M."/>
            <person name="Thierry A."/>
            <person name="Bouchier C."/>
            <person name="Caudron B."/>
            <person name="Scarpelli C."/>
            <person name="Gaillardin C."/>
            <person name="Weissenbach J."/>
            <person name="Wincker P."/>
            <person name="Souciet J.-L."/>
        </authorList>
    </citation>
    <scope>NUCLEOTIDE SEQUENCE [LARGE SCALE GENOMIC DNA]</scope>
    <source>
        <strain>CLIB 122 / E 150</strain>
    </source>
</reference>